<proteinExistence type="inferred from homology"/>
<gene>
    <name evidence="1" type="primary">glmS</name>
    <name type="ordered locus">HD_1894</name>
</gene>
<accession>Q7VKK4</accession>
<protein>
    <recommendedName>
        <fullName evidence="1">Glutamine--fructose-6-phosphate aminotransferase [isomerizing]</fullName>
        <ecNumber evidence="1">2.6.1.16</ecNumber>
    </recommendedName>
    <alternativeName>
        <fullName evidence="1">D-fructose-6-phosphate amidotransferase</fullName>
    </alternativeName>
    <alternativeName>
        <fullName evidence="1">GFAT</fullName>
    </alternativeName>
    <alternativeName>
        <fullName evidence="1">Glucosamine-6-phosphate synthase</fullName>
    </alternativeName>
    <alternativeName>
        <fullName evidence="1">Hexosephosphate aminotransferase</fullName>
    </alternativeName>
    <alternativeName>
        <fullName evidence="1">L-glutamine--D-fructose-6-phosphate amidotransferase</fullName>
    </alternativeName>
</protein>
<dbReference type="EC" id="2.6.1.16" evidence="1"/>
<dbReference type="EMBL" id="AE017143">
    <property type="protein sequence ID" value="AAP96623.1"/>
    <property type="molecule type" value="Genomic_DNA"/>
</dbReference>
<dbReference type="RefSeq" id="WP_010945651.1">
    <property type="nucleotide sequence ID" value="NC_002940.2"/>
</dbReference>
<dbReference type="SMR" id="Q7VKK4"/>
<dbReference type="STRING" id="233412.HD_1894"/>
<dbReference type="KEGG" id="hdu:HD_1894"/>
<dbReference type="eggNOG" id="COG0449">
    <property type="taxonomic scope" value="Bacteria"/>
</dbReference>
<dbReference type="HOGENOM" id="CLU_012520_5_2_6"/>
<dbReference type="OrthoDB" id="9761808at2"/>
<dbReference type="Proteomes" id="UP000001022">
    <property type="component" value="Chromosome"/>
</dbReference>
<dbReference type="GO" id="GO:0005829">
    <property type="term" value="C:cytosol"/>
    <property type="evidence" value="ECO:0007669"/>
    <property type="project" value="TreeGrafter"/>
</dbReference>
<dbReference type="GO" id="GO:0097367">
    <property type="term" value="F:carbohydrate derivative binding"/>
    <property type="evidence" value="ECO:0007669"/>
    <property type="project" value="InterPro"/>
</dbReference>
<dbReference type="GO" id="GO:0004360">
    <property type="term" value="F:glutamine-fructose-6-phosphate transaminase (isomerizing) activity"/>
    <property type="evidence" value="ECO:0007669"/>
    <property type="project" value="UniProtKB-UniRule"/>
</dbReference>
<dbReference type="GO" id="GO:0005975">
    <property type="term" value="P:carbohydrate metabolic process"/>
    <property type="evidence" value="ECO:0007669"/>
    <property type="project" value="UniProtKB-UniRule"/>
</dbReference>
<dbReference type="GO" id="GO:0006002">
    <property type="term" value="P:fructose 6-phosphate metabolic process"/>
    <property type="evidence" value="ECO:0007669"/>
    <property type="project" value="TreeGrafter"/>
</dbReference>
<dbReference type="GO" id="GO:0006487">
    <property type="term" value="P:protein N-linked glycosylation"/>
    <property type="evidence" value="ECO:0007669"/>
    <property type="project" value="TreeGrafter"/>
</dbReference>
<dbReference type="GO" id="GO:0006047">
    <property type="term" value="P:UDP-N-acetylglucosamine metabolic process"/>
    <property type="evidence" value="ECO:0007669"/>
    <property type="project" value="TreeGrafter"/>
</dbReference>
<dbReference type="CDD" id="cd00714">
    <property type="entry name" value="GFAT"/>
    <property type="match status" value="1"/>
</dbReference>
<dbReference type="CDD" id="cd05008">
    <property type="entry name" value="SIS_GlmS_GlmD_1"/>
    <property type="match status" value="1"/>
</dbReference>
<dbReference type="CDD" id="cd05009">
    <property type="entry name" value="SIS_GlmS_GlmD_2"/>
    <property type="match status" value="1"/>
</dbReference>
<dbReference type="FunFam" id="3.40.50.10490:FF:000001">
    <property type="entry name" value="Glutamine--fructose-6-phosphate aminotransferase [isomerizing]"/>
    <property type="match status" value="1"/>
</dbReference>
<dbReference type="FunFam" id="3.40.50.10490:FF:000002">
    <property type="entry name" value="Glutamine--fructose-6-phosphate aminotransferase [isomerizing]"/>
    <property type="match status" value="1"/>
</dbReference>
<dbReference type="FunFam" id="3.60.20.10:FF:000006">
    <property type="entry name" value="Glutamine--fructose-6-phosphate aminotransferase [isomerizing]"/>
    <property type="match status" value="1"/>
</dbReference>
<dbReference type="Gene3D" id="3.40.50.10490">
    <property type="entry name" value="Glucose-6-phosphate isomerase like protein, domain 1"/>
    <property type="match status" value="2"/>
</dbReference>
<dbReference type="Gene3D" id="3.60.20.10">
    <property type="entry name" value="Glutamine Phosphoribosylpyrophosphate, subunit 1, domain 1"/>
    <property type="match status" value="1"/>
</dbReference>
<dbReference type="HAMAP" id="MF_00164">
    <property type="entry name" value="GlmS"/>
    <property type="match status" value="1"/>
</dbReference>
<dbReference type="InterPro" id="IPR017932">
    <property type="entry name" value="GATase_2_dom"/>
</dbReference>
<dbReference type="InterPro" id="IPR005855">
    <property type="entry name" value="GFAT"/>
</dbReference>
<dbReference type="InterPro" id="IPR047084">
    <property type="entry name" value="GFAT_N"/>
</dbReference>
<dbReference type="InterPro" id="IPR035466">
    <property type="entry name" value="GlmS/AgaS_SIS"/>
</dbReference>
<dbReference type="InterPro" id="IPR035490">
    <property type="entry name" value="GlmS/FrlB_SIS"/>
</dbReference>
<dbReference type="InterPro" id="IPR029055">
    <property type="entry name" value="Ntn_hydrolases_N"/>
</dbReference>
<dbReference type="InterPro" id="IPR001347">
    <property type="entry name" value="SIS_dom"/>
</dbReference>
<dbReference type="InterPro" id="IPR046348">
    <property type="entry name" value="SIS_dom_sf"/>
</dbReference>
<dbReference type="NCBIfam" id="TIGR01135">
    <property type="entry name" value="glmS"/>
    <property type="match status" value="1"/>
</dbReference>
<dbReference type="NCBIfam" id="NF001484">
    <property type="entry name" value="PRK00331.1"/>
    <property type="match status" value="1"/>
</dbReference>
<dbReference type="PANTHER" id="PTHR10937">
    <property type="entry name" value="GLUCOSAMINE--FRUCTOSE-6-PHOSPHATE AMINOTRANSFERASE, ISOMERIZING"/>
    <property type="match status" value="1"/>
</dbReference>
<dbReference type="PANTHER" id="PTHR10937:SF0">
    <property type="entry name" value="GLUTAMINE--FRUCTOSE-6-PHOSPHATE TRANSAMINASE (ISOMERIZING)"/>
    <property type="match status" value="1"/>
</dbReference>
<dbReference type="Pfam" id="PF13522">
    <property type="entry name" value="GATase_6"/>
    <property type="match status" value="1"/>
</dbReference>
<dbReference type="Pfam" id="PF01380">
    <property type="entry name" value="SIS"/>
    <property type="match status" value="2"/>
</dbReference>
<dbReference type="SUPFAM" id="SSF56235">
    <property type="entry name" value="N-terminal nucleophile aminohydrolases (Ntn hydrolases)"/>
    <property type="match status" value="1"/>
</dbReference>
<dbReference type="SUPFAM" id="SSF53697">
    <property type="entry name" value="SIS domain"/>
    <property type="match status" value="1"/>
</dbReference>
<dbReference type="PROSITE" id="PS51278">
    <property type="entry name" value="GATASE_TYPE_2"/>
    <property type="match status" value="1"/>
</dbReference>
<dbReference type="PROSITE" id="PS51464">
    <property type="entry name" value="SIS"/>
    <property type="match status" value="2"/>
</dbReference>
<feature type="initiator methionine" description="Removed" evidence="1">
    <location>
        <position position="1"/>
    </location>
</feature>
<feature type="chain" id="PRO_0000135338" description="Glutamine--fructose-6-phosphate aminotransferase [isomerizing]">
    <location>
        <begin position="2"/>
        <end position="610"/>
    </location>
</feature>
<feature type="domain" description="Glutamine amidotransferase type-2" evidence="1">
    <location>
        <begin position="2"/>
        <end position="218"/>
    </location>
</feature>
<feature type="domain" description="SIS 1" evidence="1">
    <location>
        <begin position="286"/>
        <end position="426"/>
    </location>
</feature>
<feature type="domain" description="SIS 2" evidence="1">
    <location>
        <begin position="459"/>
        <end position="600"/>
    </location>
</feature>
<feature type="active site" description="Nucleophile; for GATase activity" evidence="1">
    <location>
        <position position="2"/>
    </location>
</feature>
<feature type="active site" description="For Fru-6P isomerization activity" evidence="1">
    <location>
        <position position="605"/>
    </location>
</feature>
<evidence type="ECO:0000255" key="1">
    <source>
        <dbReference type="HAMAP-Rule" id="MF_00164"/>
    </source>
</evidence>
<keyword id="KW-0032">Aminotransferase</keyword>
<keyword id="KW-0963">Cytoplasm</keyword>
<keyword id="KW-0315">Glutamine amidotransferase</keyword>
<keyword id="KW-1185">Reference proteome</keyword>
<keyword id="KW-0677">Repeat</keyword>
<keyword id="KW-0808">Transferase</keyword>
<reference key="1">
    <citation type="submission" date="2003-06" db="EMBL/GenBank/DDBJ databases">
        <title>The complete genome sequence of Haemophilus ducreyi.</title>
        <authorList>
            <person name="Munson R.S. Jr."/>
            <person name="Ray W.C."/>
            <person name="Mahairas G."/>
            <person name="Sabo P."/>
            <person name="Mungur R."/>
            <person name="Johnson L."/>
            <person name="Nguyen D."/>
            <person name="Wang J."/>
            <person name="Forst C."/>
            <person name="Hood L."/>
        </authorList>
    </citation>
    <scope>NUCLEOTIDE SEQUENCE [LARGE SCALE GENOMIC DNA]</scope>
    <source>
        <strain>35000HP / ATCC 700724</strain>
    </source>
</reference>
<comment type="function">
    <text evidence="1">Catalyzes the first step in hexosamine metabolism, converting fructose-6P into glucosamine-6P using glutamine as a nitrogen source.</text>
</comment>
<comment type="catalytic activity">
    <reaction evidence="1">
        <text>D-fructose 6-phosphate + L-glutamine = D-glucosamine 6-phosphate + L-glutamate</text>
        <dbReference type="Rhea" id="RHEA:13237"/>
        <dbReference type="ChEBI" id="CHEBI:29985"/>
        <dbReference type="ChEBI" id="CHEBI:58359"/>
        <dbReference type="ChEBI" id="CHEBI:58725"/>
        <dbReference type="ChEBI" id="CHEBI:61527"/>
        <dbReference type="EC" id="2.6.1.16"/>
    </reaction>
</comment>
<comment type="subunit">
    <text evidence="1">Homodimer.</text>
</comment>
<comment type="subcellular location">
    <subcellularLocation>
        <location evidence="1">Cytoplasm</location>
    </subcellularLocation>
</comment>
<sequence length="610" mass="66860">MCGIVGAVAQRDVADILVDGLHRLEYRGYDSAGVAVLNEQHHMQIIRRVGKVKALEEAVIGEKVFGGTGIAHTRWATHGEPSEINAHPHRSGKIAVVHNGIIENYEALKVVLQQRGYIFASHTDTEVIAHLVEWELRTAHSLLEAVQKAVVQLRGAYGTVVMNQDDPTRLVVARSGSPLVIGYGIGENFIASDPLALLSVTHRFAYLEEGDVAEITRHAVAIYNQAGEAVTREIHQGNFEQDAADKGVYRHYMQKEIFEQPIAIMNTLAGRIKDGQVNIEAIAPNAADILAKVEHIQIVACGTSYNAGMVARYWFEEIANISCNVEIASEFRYRKFVVQPNSLLITLSQSGETADTLAALRLAKQSGYMAAMTICNVASSSLVRESDFAFMTKAGIEIGVASTKAFTTQLTCLLLLNVAIGRLKGRLSVAQEQQIVQSLQKLPSQIESALVFDKAIEKLSEDFADKQHTLFLGRGEFYPIAMESALKLKEISYIHAEAYAAGELKHGPLALIDSEMPVVVVAPENDLLEKVKSNIEEVRARGGQLYVFADHEAGFEQTVDFKTIVLPRVDAVTAPIFYTVPLQLLSYHIALIKGTDVDQPRNLAKAVTVE</sequence>
<name>GLMS_HAEDU</name>
<organism>
    <name type="scientific">Haemophilus ducreyi (strain 35000HP / ATCC 700724)</name>
    <dbReference type="NCBI Taxonomy" id="233412"/>
    <lineage>
        <taxon>Bacteria</taxon>
        <taxon>Pseudomonadati</taxon>
        <taxon>Pseudomonadota</taxon>
        <taxon>Gammaproteobacteria</taxon>
        <taxon>Pasteurellales</taxon>
        <taxon>Pasteurellaceae</taxon>
        <taxon>Haemophilus</taxon>
    </lineage>
</organism>